<sequence>MLVCLHLQVFLASVALFEVAASDTIAQAASTTTISDAVSKVKTQVNKAFLDSRTRLKTALSSEAPTTRQLSEYFKHAKGRTRTAIRNGQVWEESLKRLRRDTTLTNVTDPSLDLTALSWEVGCGAPVPLVKCDENSPYRTITGDCNNRRSPALGAANRALARWLPAEYEDGLAVPFGWTQRKTRNGFRVPLAREVSNKIVGYLDEEGVLDQNRSLLFMQWGQIVDHDLDFAPETELGSSEHSKVQCEEYCIQGDNCFPIMFPKNDPKLKTQGKCMPFFRAGFVCPTPPYQSLARDQINAVTSFLDASLVYGSEPSLASRLRNLSSPLGLMAVNQEAWDHGLAYPPFNNVKPSPCEFINTTAHVPCFQAGDSRASEQILLATVHTLLLREHNRLARELKRLNPHWDGEMLYQEARKILGAFIQIITFRDYLPIVLGSEMQKWIPPYQGYNNSVDPRISNVFTFAFRFGHMEVPSTVSRLDENYQPWGPEAELPLHTLFFNTWRIIKDGGIDPLVRGLLAKKSKLMNQNKMVTSELRNKLFQPTHKIHGFDLAAINLQRCRDHGMPGYNSWRGFCGLSQPKTLKGLQAVLKNKILAKKLLDLYKTPDNIDIWIGGNAEPMVERGRVGPLLACLLGRQFQQIRDGDRFWWENPGVFTEKQRDSLQKVSFSRLICDNTHVTKVPLHAFQANNYPHDFVDCSAVDKLDLSPWASREN</sequence>
<feature type="signal peptide" evidence="5">
    <location>
        <begin position="1"/>
        <end position="21"/>
    </location>
</feature>
<feature type="propeptide" id="PRO_0000447715" evidence="9">
    <location>
        <begin position="22"/>
        <end position="117"/>
    </location>
</feature>
<feature type="chain" id="PRO_5002652894" description="Lactoperoxidase" evidence="9">
    <location>
        <begin position="118"/>
        <end position="712"/>
    </location>
</feature>
<feature type="active site" description="Proton acceptor" evidence="6">
    <location>
        <position position="226"/>
    </location>
</feature>
<feature type="binding site" description="covalent" evidence="9 11 13 14 15 16 22 23 24 25 26 27 28 29 30 31 32 33 34 35 36 37 38 39 40">
    <location>
        <position position="225"/>
    </location>
    <ligand>
        <name>heme b</name>
        <dbReference type="ChEBI" id="CHEBI:60344"/>
    </ligand>
</feature>
<feature type="binding site" evidence="9 11 13 14 15 16 22 23 24 25 26 27 28 29 30 31 32 33 34 35 36 37 38 39 40">
    <location>
        <position position="227"/>
    </location>
    <ligand>
        <name>Ca(2+)</name>
        <dbReference type="ChEBI" id="CHEBI:29108"/>
    </ligand>
</feature>
<feature type="binding site" evidence="9 11 13 14 15 16 22 23 24 25 26 27 28 29 30 31 32 33 34 35 36 37 38 39 40">
    <location>
        <position position="301"/>
    </location>
    <ligand>
        <name>Ca(2+)</name>
        <dbReference type="ChEBI" id="CHEBI:29108"/>
    </ligand>
</feature>
<feature type="binding site" evidence="9 11 13 14 15 16 22 23 24 25 26 27 28 29 30 31 32 33 34 35 36 37 38 39 40">
    <location>
        <position position="303"/>
    </location>
    <ligand>
        <name>Ca(2+)</name>
        <dbReference type="ChEBI" id="CHEBI:29108"/>
    </ligand>
</feature>
<feature type="binding site" evidence="9 11 13 14 15 16 22 23 24 25 26 27 28 29 30 31 32 33 34 35 36 37 38 39 40">
    <location>
        <position position="305"/>
    </location>
    <ligand>
        <name>Ca(2+)</name>
        <dbReference type="ChEBI" id="CHEBI:29108"/>
    </ligand>
</feature>
<feature type="binding site" evidence="9 11 13 14 15 16 22 23 24 25 26 27 28 29 30 31 32 33 34 35 36 37 38 39 40">
    <location>
        <position position="307"/>
    </location>
    <ligand>
        <name>Ca(2+)</name>
        <dbReference type="ChEBI" id="CHEBI:29108"/>
    </ligand>
</feature>
<feature type="binding site" description="covalent" evidence="9 11 13 14 15 16 22 23 24 25 26 27 28 29 30 31 32 33 34 35 36 37 38 39 40">
    <location>
        <position position="375"/>
    </location>
    <ligand>
        <name>heme b</name>
        <dbReference type="ChEBI" id="CHEBI:60344"/>
    </ligand>
</feature>
<feature type="binding site" description="axial binding residue" evidence="9 11 13 14 15 16 22 23 24 25 26 27 28 29 30 31 32 33 34 35 36 37 38 39 40">
    <location>
        <position position="468"/>
    </location>
    <ligand>
        <name>heme b</name>
        <dbReference type="ChEBI" id="CHEBI:60344"/>
    </ligand>
    <ligandPart>
        <name>Fe</name>
        <dbReference type="ChEBI" id="CHEBI:18248"/>
    </ligandPart>
</feature>
<feature type="site" description="Transition state stabilizer" evidence="6">
    <location>
        <position position="372"/>
    </location>
</feature>
<feature type="modified residue" description="Phosphoserine" evidence="9">
    <location>
        <position position="315"/>
    </location>
</feature>
<feature type="modified residue" description="3'-nitrotyrosine" evidence="1">
    <location>
        <position position="482"/>
    </location>
</feature>
<feature type="glycosylation site" description="N-linked (GlcNAc...) (complex) asparagine; alternate" evidence="7 12">
    <location>
        <position position="106"/>
    </location>
</feature>
<feature type="glycosylation site" description="N-linked (GlcNAc...) (hybrid) asparagine; alternate" evidence="7 12">
    <location>
        <position position="106"/>
    </location>
</feature>
<feature type="glycosylation site" description="N-linked (GlcNAc...) (complex) asparagine; alternate" evidence="7 9 11 12 13 14 15 16 22 23 24 25 26 27 28 29 31 32 33 34 35 36 37 38 39 40">
    <location>
        <position position="212"/>
    </location>
</feature>
<feature type="glycosylation site" description="N-linked (GlcNAc...) (hybrid) asparagine; alternate" evidence="7 9 11 12 13 14 15 16 22 23 24 25 26 27 28 29 31 32 33 34 35 36 37 38 39 40">
    <location>
        <position position="212"/>
    </location>
</feature>
<feature type="glycosylation site" description="N-linked (GlcNAc...) (high mannose) asparagine" evidence="7 9 11 12 13 14 15 16 22 23 24 25 26 27 28 29 30 31 32 33 34 35 36 37 38 39 40">
    <location>
        <position position="322"/>
    </location>
</feature>
<feature type="glycosylation site" description="N-linked (GlcNAc...) asparagine" evidence="7 9 11 13 14 15 16 22 23 24 25 26 27 28 29 30 31 32 33 34 35 36 37 38 39 40">
    <location>
        <position position="358"/>
    </location>
</feature>
<feature type="glycosylation site" description="N-linked (GlcNAc...) (complex) asparagine; alternate" evidence="7 9 11 12 13 14 15 16 22 23 24 25 26 27 28 29 30 31 32 33 34 35 36 37 38 39 40">
    <location>
        <position position="449"/>
    </location>
</feature>
<feature type="glycosylation site" description="N-linked (GlcNAc...) (high mannose) asparagine; alternate" evidence="7 9 11 12 13 14 15 16 22 23 24 25 26 27 28 29 30 31 32 33 34 35 36 37 38 39 40">
    <location>
        <position position="449"/>
    </location>
</feature>
<feature type="glycosylation site" description="N-linked (GlcNAc...) (hybrid) asparagine; alternate" evidence="7 9 11 12 13 14 15 16 22 23 24 25 26 27 28 29 30 31 32 33 34 35 36 37 38 39 40">
    <location>
        <position position="449"/>
    </location>
</feature>
<feature type="disulfide bond" evidence="9 11 13 14 15 16 22 23 24 25 26 27 28 29 30 31 32 33 34 35 36 37 38 39 40">
    <location>
        <begin position="123"/>
        <end position="284"/>
    </location>
</feature>
<feature type="disulfide bond" evidence="9 11 13 14 15 16 22 23 24 25 26 27 28 29 30 31 32 33 34 35 36 37 38 39 40">
    <location>
        <begin position="132"/>
        <end position="145"/>
    </location>
</feature>
<feature type="disulfide bond" evidence="9 11 13 14 15 16 22 23 24 25 26 27 28 29 30 31 32 33 34 35 36 37 38 39 40">
    <location>
        <begin position="246"/>
        <end position="256"/>
    </location>
</feature>
<feature type="disulfide bond" evidence="9 11 13 14 15 16 22 23 24 25 26 27 28 29 30 31 32 33 34 35 36 37 38 39 40">
    <location>
        <begin position="250"/>
        <end position="274"/>
    </location>
</feature>
<feature type="disulfide bond" evidence="9 11 13 14 15 16 22 23 24 25 26 27 28 29 30 31 32 33 34 35 36 37 38 39 40">
    <location>
        <begin position="354"/>
        <end position="365"/>
    </location>
</feature>
<feature type="disulfide bond" evidence="9 11 13 14 15 16 22 23 24 25 26 27 28 29 30 31 32 33 34 35 36 37 38 39 40">
    <location>
        <begin position="573"/>
        <end position="630"/>
    </location>
</feature>
<feature type="disulfide bond" evidence="9 11 13 14 15 16 22 23 24 25 26 27 28 29 30 31 32 33 34 35 36 37 38 39 40">
    <location>
        <begin position="671"/>
        <end position="696"/>
    </location>
</feature>
<feature type="sequence conflict" description="In Ref. 1; ABN41562." evidence="18" ref="1">
    <original>D</original>
    <variation>E</variation>
    <location>
        <position position="113"/>
    </location>
</feature>
<feature type="sequence conflict" description="In Ref. 1; ABN41562." evidence="18" ref="1">
    <original>KCDEN</original>
    <variation>TCDEQ</variation>
    <location>
        <begin position="131"/>
        <end position="135"/>
    </location>
</feature>
<feature type="sequence conflict" description="In Ref. 1; ABN41562." evidence="18" ref="1">
    <original>IQGDN</original>
    <variation>VQGDE</variation>
    <location>
        <begin position="251"/>
        <end position="255"/>
    </location>
</feature>
<feature type="sequence conflict" description="In Ref. 1; ABN41562." evidence="18" ref="1">
    <original>K</original>
    <variation>N</variation>
    <location>
        <position position="520"/>
    </location>
</feature>
<feature type="sequence conflict" description="In Ref. 1; ABN41562." evidence="18" ref="1">
    <original>I</original>
    <variation>V</variation>
    <location>
        <position position="545"/>
    </location>
</feature>
<feature type="sequence conflict" description="In Ref. 1; ABN41562." evidence="18" ref="1">
    <original>I</original>
    <variation>V</variation>
    <location>
        <position position="592"/>
    </location>
</feature>
<feature type="sequence conflict" description="In Ref. 1; ABN41562." evidence="18" ref="1">
    <original>V</original>
    <variation>I</variation>
    <location>
        <position position="676"/>
    </location>
</feature>
<feature type="strand" evidence="46">
    <location>
        <begin position="120"/>
        <end position="122"/>
    </location>
</feature>
<feature type="strand" evidence="49">
    <location>
        <begin position="127"/>
        <end position="129"/>
    </location>
</feature>
<feature type="strand" evidence="42">
    <location>
        <begin position="141"/>
        <end position="143"/>
    </location>
</feature>
<feature type="strand" evidence="48">
    <location>
        <begin position="146"/>
        <end position="150"/>
    </location>
</feature>
<feature type="turn" evidence="48">
    <location>
        <begin position="151"/>
        <end position="154"/>
    </location>
</feature>
<feature type="strand" evidence="48">
    <location>
        <begin position="156"/>
        <end position="159"/>
    </location>
</feature>
<feature type="strand" evidence="48">
    <location>
        <begin position="171"/>
        <end position="173"/>
    </location>
</feature>
<feature type="strand" evidence="44">
    <location>
        <begin position="178"/>
        <end position="181"/>
    </location>
</feature>
<feature type="helix" evidence="48">
    <location>
        <begin position="192"/>
        <end position="199"/>
    </location>
</feature>
<feature type="strand" evidence="48">
    <location>
        <begin position="209"/>
        <end position="214"/>
    </location>
</feature>
<feature type="helix" evidence="48">
    <location>
        <begin position="215"/>
        <end position="228"/>
    </location>
</feature>
<feature type="turn" evidence="47">
    <location>
        <begin position="235"/>
        <end position="237"/>
    </location>
</feature>
<feature type="helix" evidence="48">
    <location>
        <begin position="243"/>
        <end position="247"/>
    </location>
</feature>
<feature type="strand" evidence="41">
    <location>
        <begin position="254"/>
        <end position="256"/>
    </location>
</feature>
<feature type="helix" evidence="48">
    <location>
        <begin position="266"/>
        <end position="271"/>
    </location>
</feature>
<feature type="strand" evidence="48">
    <location>
        <begin position="273"/>
        <end position="275"/>
    </location>
</feature>
<feature type="strand" evidence="48">
    <location>
        <begin position="282"/>
        <end position="284"/>
    </location>
</feature>
<feature type="strand" evidence="49">
    <location>
        <begin position="286"/>
        <end position="288"/>
    </location>
</feature>
<feature type="strand" evidence="48">
    <location>
        <begin position="290"/>
        <end position="292"/>
    </location>
</feature>
<feature type="strand" evidence="48">
    <location>
        <begin position="296"/>
        <end position="298"/>
    </location>
</feature>
<feature type="strand" evidence="48">
    <location>
        <begin position="302"/>
        <end position="305"/>
    </location>
</feature>
<feature type="helix" evidence="48">
    <location>
        <begin position="307"/>
        <end position="310"/>
    </location>
</feature>
<feature type="helix" evidence="48">
    <location>
        <begin position="314"/>
        <end position="319"/>
    </location>
</feature>
<feature type="strand" evidence="42">
    <location>
        <begin position="320"/>
        <end position="322"/>
    </location>
</feature>
<feature type="strand" evidence="47">
    <location>
        <begin position="324"/>
        <end position="327"/>
    </location>
</feature>
<feature type="strand" evidence="45">
    <location>
        <begin position="338"/>
        <end position="340"/>
    </location>
</feature>
<feature type="helix" evidence="48">
    <location>
        <begin position="353"/>
        <end position="356"/>
    </location>
</feature>
<feature type="turn" evidence="48">
    <location>
        <begin position="359"/>
        <end position="361"/>
    </location>
</feature>
<feature type="turn" evidence="48">
    <location>
        <begin position="371"/>
        <end position="374"/>
    </location>
</feature>
<feature type="helix" evidence="48">
    <location>
        <begin position="377"/>
        <end position="400"/>
    </location>
</feature>
<feature type="helix" evidence="48">
    <location>
        <begin position="406"/>
        <end position="427"/>
    </location>
</feature>
<feature type="helix" evidence="48">
    <location>
        <begin position="429"/>
        <end position="434"/>
    </location>
</feature>
<feature type="helix" evidence="48">
    <location>
        <begin position="435"/>
        <end position="437"/>
    </location>
</feature>
<feature type="helix" evidence="48">
    <location>
        <begin position="438"/>
        <end position="441"/>
    </location>
</feature>
<feature type="strand" evidence="43">
    <location>
        <begin position="450"/>
        <end position="452"/>
    </location>
</feature>
<feature type="helix" evidence="48">
    <location>
        <begin position="460"/>
        <end position="463"/>
    </location>
</feature>
<feature type="helix" evidence="48">
    <location>
        <begin position="464"/>
        <end position="470"/>
    </location>
</feature>
<feature type="strand" evidence="48">
    <location>
        <begin position="473"/>
        <end position="476"/>
    </location>
</feature>
<feature type="strand" evidence="48">
    <location>
        <begin position="482"/>
        <end position="484"/>
    </location>
</feature>
<feature type="strand" evidence="49">
    <location>
        <begin position="486"/>
        <end position="488"/>
    </location>
</feature>
<feature type="strand" evidence="48">
    <location>
        <begin position="490"/>
        <end position="492"/>
    </location>
</feature>
<feature type="helix" evidence="48">
    <location>
        <begin position="493"/>
        <end position="496"/>
    </location>
</feature>
<feature type="helix" evidence="48">
    <location>
        <begin position="501"/>
        <end position="504"/>
    </location>
</feature>
<feature type="turn" evidence="48">
    <location>
        <begin position="505"/>
        <end position="507"/>
    </location>
</feature>
<feature type="helix" evidence="48">
    <location>
        <begin position="509"/>
        <end position="518"/>
    </location>
</feature>
<feature type="strand" evidence="48">
    <location>
        <begin position="519"/>
        <end position="522"/>
    </location>
</feature>
<feature type="strand" evidence="49">
    <location>
        <begin position="526"/>
        <end position="528"/>
    </location>
</feature>
<feature type="helix" evidence="48">
    <location>
        <begin position="532"/>
        <end position="535"/>
    </location>
</feature>
<feature type="turn" evidence="49">
    <location>
        <begin position="541"/>
        <end position="543"/>
    </location>
</feature>
<feature type="strand" evidence="48">
    <location>
        <begin position="545"/>
        <end position="548"/>
    </location>
</feature>
<feature type="helix" evidence="48">
    <location>
        <begin position="550"/>
        <end position="560"/>
    </location>
</feature>
<feature type="helix" evidence="48">
    <location>
        <begin position="566"/>
        <end position="572"/>
    </location>
</feature>
<feature type="helix" evidence="48">
    <location>
        <begin position="581"/>
        <end position="588"/>
    </location>
</feature>
<feature type="helix" evidence="48">
    <location>
        <begin position="591"/>
        <end position="601"/>
    </location>
</feature>
<feature type="helix" evidence="48">
    <location>
        <begin position="604"/>
        <end position="606"/>
    </location>
</feature>
<feature type="helix" evidence="48">
    <location>
        <begin position="609"/>
        <end position="615"/>
    </location>
</feature>
<feature type="strand" evidence="48">
    <location>
        <begin position="622"/>
        <end position="624"/>
    </location>
</feature>
<feature type="helix" evidence="48">
    <location>
        <begin position="626"/>
        <end position="641"/>
    </location>
</feature>
<feature type="helix" evidence="48">
    <location>
        <begin position="655"/>
        <end position="661"/>
    </location>
</feature>
<feature type="helix" evidence="48">
    <location>
        <begin position="666"/>
        <end position="673"/>
    </location>
</feature>
<feature type="strand" evidence="48">
    <location>
        <begin position="678"/>
        <end position="682"/>
    </location>
</feature>
<feature type="turn" evidence="48">
    <location>
        <begin position="689"/>
        <end position="692"/>
    </location>
</feature>
<feature type="strand" evidence="48">
    <location>
        <begin position="693"/>
        <end position="695"/>
    </location>
</feature>
<feature type="helix" evidence="48">
    <location>
        <begin position="696"/>
        <end position="698"/>
    </location>
</feature>
<feature type="helix" evidence="48">
    <location>
        <begin position="705"/>
        <end position="707"/>
    </location>
</feature>
<protein>
    <recommendedName>
        <fullName evidence="17">Lactoperoxidase</fullName>
        <shortName evidence="17">LPO</shortName>
        <ecNumber evidence="3">1.11.1.7</ecNumber>
    </recommendedName>
</protein>
<reference evidence="20 26" key="1">
    <citation type="journal article" date="2008" name="J. Mol. Biol.">
        <title>Crystal structure of lactoperoxidase at 2.4 A resolution.</title>
        <authorList>
            <person name="Singh A.K."/>
            <person name="Singh N."/>
            <person name="Sharma S."/>
            <person name="Singh S.B."/>
            <person name="Kaur P."/>
            <person name="Bhushan A."/>
            <person name="Srinivasan A."/>
            <person name="Singh T.P."/>
        </authorList>
    </citation>
    <scope>NUCLEOTIDE SEQUENCE [MRNA]</scope>
    <scope>PROTEIN SEQUENCE OF 118-137</scope>
    <scope>X-RAY CRYSTALLOGRAPHY (2.40 ANGSTROMS) OF 118-712 IN COMPLEX WITH CALCIUM AND HEME</scope>
    <scope>SUBCELLULAR LOCATION</scope>
    <scope>TISSUE SPECIFICITY</scope>
    <scope>PHOSPHORYLATION AT SER-315</scope>
    <scope>GLYCOSYLATION AT ASN-212; ASN-322; ASN-358 AND ASN-449</scope>
    <scope>DISULFIDE BONDS</scope>
</reference>
<reference evidence="21" key="2">
    <citation type="submission" date="2016-04" db="EMBL/GenBank/DDBJ databases">
        <title>Polished mammalian reference genomes with single-molecule sequencing and chromosome conformation capture applied to the Capra hircus genome.</title>
        <authorList>
            <person name="Bickhart D.M."/>
            <person name="Koren S."/>
            <person name="Rosen B."/>
            <person name="Hastie A."/>
            <person name="Liachko I."/>
            <person name="Sullivan S.T."/>
            <person name="Burton J."/>
            <person name="Sayre B.L."/>
            <person name="Huson H.J."/>
            <person name="Lee J."/>
            <person name="Lam E."/>
            <person name="Kelley C.M."/>
            <person name="Hutchison J.L."/>
            <person name="Zhou Y."/>
            <person name="Sun J."/>
            <person name="Crisa A."/>
            <person name="Schwartz J.C."/>
            <person name="Hammond J.A."/>
            <person name="Schroeder S.G."/>
            <person name="Liu G.E."/>
            <person name="Dunham M."/>
            <person name="Shendure J."/>
            <person name="Sonstegard T.S."/>
            <person name="Phillippy A.M."/>
            <person name="Van Tassell C.P."/>
            <person name="Smith T.P."/>
        </authorList>
    </citation>
    <scope>NUCLEOTIDE SEQUENCE [LARGE SCALE GENOMIC DNA]</scope>
</reference>
<reference evidence="18" key="3">
    <citation type="journal article" date="2000" name="Life Sci.">
        <title>Thiocyanate mediated antifungal and antibacterial property of goat milk lactoperoxidase.</title>
        <authorList>
            <person name="Benoy M.J."/>
            <person name="Essy A.K."/>
            <person name="Sreekumar B."/>
            <person name="Haridas M."/>
        </authorList>
    </citation>
    <scope>FUNCTION</scope>
    <scope>BIOTECHNOLOGY</scope>
</reference>
<reference evidence="18" key="4">
    <citation type="journal article" date="2018" name="J. Agric. Food Chem.">
        <title>Comparative Site-Specific N-Glycosylation Analysis of Lactoperoxidase from Buffalo and Goat Milk Using RP-UHPLC-MS/MS Reveals a Distinct Glycan Pattern.</title>
        <authorList>
            <person name="B S G.K."/>
            <person name="Mohan Reddy P."/>
            <person name="Kottekad S."/>
        </authorList>
    </citation>
    <scope>SUBCELLULAR LOCATION</scope>
    <scope>TISSUE SPECIFICITY</scope>
    <scope>IDENTIFICATION BY MASS SPECTROMETRY</scope>
    <scope>GLYCOSYLATION AT ASN-106; ASN-212; ASN-322 AND ASN-449</scope>
</reference>
<reference evidence="22 23 24 25" key="5">
    <citation type="submission" date="2007-01" db="PDB data bank">
        <title>Crystal structure of a ternary complex of goat lactoperoxidase with cyanide and iodide ions at 2.4 A resolution.</title>
        <authorList>
            <person name="Singh A.K."/>
            <person name="Singh N."/>
            <person name="Singh S.B."/>
            <person name="Sharma S."/>
            <person name="Kaur P."/>
            <person name="Singh T.P."/>
        </authorList>
    </citation>
    <scope>X-RAY CRYSTALLOGRAPHY (2.40 ANGSTROMS) OF 118-712 IN COMPLEX WITH CALCIUM AND HEME</scope>
    <scope>GLYCOSYLATION AT ASN-212; ASN-322; ASN-358 AND ASN-449</scope>
    <scope>DISULFIDE BONDS</scope>
</reference>
<reference evidence="27 28 29 30 31 32 33" key="6">
    <citation type="submission" date="2011-03" db="PDB data bank">
        <title>Crystal structure of the complex of goat lactoperoxidase with Pyrazinamide at 2.1 A resolution.</title>
        <authorList>
            <person name="Singh R.P."/>
            <person name="Pandey N."/>
            <person name="Singh A.K."/>
            <person name="Sinha M."/>
            <person name="Kaur P."/>
            <person name="Sharma S."/>
            <person name="Singh T.P."/>
        </authorList>
    </citation>
    <scope>X-RAY CRYSTALLOGRAPHY (2.10 ANGSTROMS) OF 118-712 IN COMPLEX WITH CALCIUM AND HEME</scope>
    <scope>GLYCOSYLATION AT ASN-212; ASN-322; ASN-358 AND ASN-449</scope>
    <scope>DISULFIDE BONDS</scope>
</reference>
<reference evidence="34 35 36 39 40" key="7">
    <citation type="submission" date="2013-10" db="PDB data bank">
        <title>Crystal structure of goat lactoperoxidase with 3-Amino pyrazole at 1.79 Angstrom resolution.</title>
        <authorList>
            <person name="Tyagi T.K."/>
            <person name="Singh R.P."/>
            <person name="Singh A.K."/>
            <person name="Singh A."/>
            <person name="Bhushan A."/>
            <person name="Sinha M."/>
            <person name="Kaur P."/>
            <person name="Sharma S."/>
            <person name="Singh T.P."/>
        </authorList>
    </citation>
    <scope>X-RAY CRYSTALLOGRAPHY (1.79 ANGSTROMS) OF 118-712 IN COMPLEX WITH CALCIUM AND HEME</scope>
    <scope>GLYCOSYLATION AT ASN-212; ASN-322; ASN-358 AND ASN-449</scope>
    <scope>DISULFIDE BONDS</scope>
</reference>
<reference key="8">
    <citation type="journal article" date="2015" name="Acta Crystallogr. F Struct. Biol. Commun.">
        <title>Mode of binding of the antithyroid drug propylthiouracil to mammalian haem peroxidases.</title>
        <authorList>
            <person name="Singh R.P."/>
            <person name="Singh A."/>
            <person name="Kushwaha G.S."/>
            <person name="Singh A.K."/>
            <person name="Kaur P."/>
            <person name="Sharma S."/>
            <person name="Singh T.P."/>
        </authorList>
    </citation>
    <scope>RETRACTED PAPER</scope>
</reference>
<reference evidence="18" key="9">
    <citation type="journal article" date="2015" name="Acta Crystallogr. F Struct. Biol. Commun.">
        <title>Retraction: Mode of binding of the antithyroid drug propylthiouracil to mammalian haem peroxidases.</title>
        <authorList>
            <person name="Singh R.P."/>
            <person name="Singh A."/>
            <person name="Kushwaha G.S."/>
            <person name="Singh A.K."/>
            <person name="Kaur P."/>
            <person name="Sharma S."/>
            <person name="Singh T.P."/>
        </authorList>
    </citation>
    <scope>RETRACTION NOTICE OF PUBMED:25760705</scope>
</reference>
<reference evidence="37" key="10">
    <citation type="journal article" date="2016" name="FEBS Open Bio">
        <title>Dual binding mode of antithyroid drug methimazole to mammalian heme peroxidases - structural determination of the lactoperoxidase-methimazole complex at 1.97 A resolution.</title>
        <authorList>
            <person name="Singh R.P."/>
            <person name="Singh A."/>
            <person name="Sirohi H.V."/>
            <person name="Singh A.K."/>
            <person name="Kaur P."/>
            <person name="Sharma S."/>
            <person name="Singh T.P."/>
        </authorList>
    </citation>
    <scope>X-RAY CRYSTALLOGRAPHY (1.97 ANGSTROMS) OF 118-712 IN COMPLEX WITH CALCIUM AND HEME</scope>
    <scope>ACTIVITY REGULATION</scope>
    <scope>SUBCELLULAR LOCATION</scope>
    <scope>TISSUE SPECIFICITY</scope>
    <scope>GLYCOSYLATION AT ASN-212; ASN-322; ASN-358 AND ASN-449</scope>
    <scope>DISULFIDE BONDS</scope>
</reference>
<reference evidence="38" key="11">
    <citation type="submission" date="2016-01" db="PDB data bank">
        <title>Mode of binding of antithyroid drug, propylthiouracil to lactoperoxidase: Binding studies and structure determination.</title>
        <authorList>
            <person name="Singh R.P."/>
            <person name="Singh A."/>
            <person name="Sharma P."/>
            <person name="Kaur P."/>
            <person name="Sharma S."/>
            <person name="Singh T.P."/>
        </authorList>
    </citation>
    <scope>X-RAY CRYSTALLOGRAPHY (2.50 ANGSTROMS) OF 118-712 IN COMPLEX WITH CALCIUM AND HEME</scope>
    <scope>GLYCOSYLATION AT ASN-212; ASN-322; ASN-358 AND ASN-449</scope>
    <scope>DISULFIDE BONDS</scope>
</reference>
<comment type="function">
    <text evidence="2 3 4 8">Heme-containing oxidoreductase which catalyzes the conversion of thiocyanate (SCN(-)) into antimicrobial agent hypothiocyanous acid (OSCN(-)) in the presence of hydrogen peroxide (H2O2) (By similarity). Also involved in the conversion of iodide (I(-)) into hypoiodite (IO(-)) in the presence of H2O2 (By similarity). Responsible for the inactivation of a wide range of micro-organisms and hence, important component of defense mechanism (PubMed:10894086). Shows antibacterial properties against several Gram-positive bacteria including some Staphylococcus species and Gram-negative bacteria including E.coli, P.aeruginosa and some Salmonella species (PubMed:10894086). Inhibits the growth of several fungi including A.niger, Trichoderma species, C.cassicola, P.meadii and C.salmonicolor (PubMed:10894086). Does not have anti-fungal activity towards C.albicans and Pythium species (PubMed:10894086). May protect the udder from infection and may promote growth in newborns (PubMed:10894086). May be implicated in airway host defense against infection (By similarity). May contribute to maintaining an appropriate H2O2 cellular level, therefore protecting cells from H2O2-caused injuries and inflammation (By similarity).</text>
</comment>
<comment type="catalytic activity">
    <reaction evidence="3">
        <text>2 a phenolic donor + H2O2 = 2 a phenolic radical donor + 2 H2O</text>
        <dbReference type="Rhea" id="RHEA:56136"/>
        <dbReference type="ChEBI" id="CHEBI:15377"/>
        <dbReference type="ChEBI" id="CHEBI:16240"/>
        <dbReference type="ChEBI" id="CHEBI:139520"/>
        <dbReference type="ChEBI" id="CHEBI:139521"/>
        <dbReference type="EC" id="1.11.1.7"/>
    </reaction>
    <physiologicalReaction direction="left-to-right" evidence="3">
        <dbReference type="Rhea" id="RHEA:56137"/>
    </physiologicalReaction>
</comment>
<comment type="catalytic activity">
    <reaction evidence="3">
        <text>thiocyanate + H2O2 + H(+) = hypothiocyanous acid + H2O</text>
        <dbReference type="Rhea" id="RHEA:69416"/>
        <dbReference type="ChEBI" id="CHEBI:15377"/>
        <dbReference type="ChEBI" id="CHEBI:15378"/>
        <dbReference type="ChEBI" id="CHEBI:16240"/>
        <dbReference type="ChEBI" id="CHEBI:18022"/>
        <dbReference type="ChEBI" id="CHEBI:133907"/>
    </reaction>
    <physiologicalReaction direction="left-to-right" evidence="3">
        <dbReference type="Rhea" id="RHEA:69417"/>
    </physiologicalReaction>
</comment>
<comment type="catalytic activity">
    <reaction evidence="3">
        <text>iodide + H2O2 = hypoiodite + H2O</text>
        <dbReference type="Rhea" id="RHEA:69420"/>
        <dbReference type="ChEBI" id="CHEBI:15377"/>
        <dbReference type="ChEBI" id="CHEBI:16240"/>
        <dbReference type="ChEBI" id="CHEBI:16382"/>
        <dbReference type="ChEBI" id="CHEBI:29232"/>
    </reaction>
    <physiologicalReaction direction="left-to-right" evidence="3">
        <dbReference type="Rhea" id="RHEA:69421"/>
    </physiologicalReaction>
</comment>
<comment type="cofactor">
    <cofactor evidence="6">
        <name>Ca(2+)</name>
        <dbReference type="ChEBI" id="CHEBI:29108"/>
    </cofactor>
    <text evidence="6 9 11">Binds 1 Ca(2+) ion per heterodimer.</text>
</comment>
<comment type="cofactor">
    <cofactor evidence="6">
        <name>heme b</name>
        <dbReference type="ChEBI" id="CHEBI:60344"/>
    </cofactor>
    <text evidence="6 9 11">Binds 1 heme b (iron(II)-protoporphyrin IX) group covalently per heterodimer.</text>
</comment>
<comment type="activity regulation">
    <text evidence="11">Inhibited by small molecule methimazole (MMZ).</text>
</comment>
<comment type="subcellular location">
    <subcellularLocation>
        <location evidence="9 11 12">Secreted</location>
    </subcellularLocation>
    <subcellularLocation>
        <location evidence="4">Cytoplasm</location>
    </subcellularLocation>
</comment>
<comment type="tissue specificity">
    <text evidence="9 11 12">Mammary gland; milk.</text>
</comment>
<comment type="biotechnology">
    <text evidence="8">The lactoperoxidase system is used by the dairy industry for the preservation of raw milk during transportation (PubMed:10894086). Freshly obtained milk is supplemented with thiocyanate and hydrogen peroxide which are used by milk LPO to produce antimicrobial agents (PubMed:10894086).</text>
</comment>
<comment type="miscellaneous">
    <text evidence="3">Thiocyanate (SCN(-)) and hypothiocyanite (OSCN(-)) are bound in the distal heme cavity. The iodide ion (I(-)) occupies a position which is stabilized by the interactions with heme moiety, His-226, Arg-372 and Glu-375. Hydrogen peroxide is held between the heme iron and His-226.</text>
</comment>
<comment type="similarity">
    <text evidence="18">Belongs to the peroxidase family. XPO subfamily.</text>
</comment>
<comment type="caution">
    <text evidence="10 19">The drug propylthiouracilin was reported to bind to the distal heme-pockets of LPO (PubMed:25760705). However, the paper was retracted as some concerns were raised about the modeling.</text>
</comment>
<keyword id="KW-0002">3D-structure</keyword>
<keyword id="KW-0044">Antibiotic</keyword>
<keyword id="KW-0929">Antimicrobial</keyword>
<keyword id="KW-0106">Calcium</keyword>
<keyword id="KW-0963">Cytoplasm</keyword>
<keyword id="KW-0903">Direct protein sequencing</keyword>
<keyword id="KW-1015">Disulfide bond</keyword>
<keyword id="KW-0325">Glycoprotein</keyword>
<keyword id="KW-0349">Heme</keyword>
<keyword id="KW-0376">Hydrogen peroxide</keyword>
<keyword id="KW-0408">Iron</keyword>
<keyword id="KW-0479">Metal-binding</keyword>
<keyword id="KW-0944">Nitration</keyword>
<keyword id="KW-0560">Oxidoreductase</keyword>
<keyword id="KW-0575">Peroxidase</keyword>
<keyword id="KW-0597">Phosphoprotein</keyword>
<keyword id="KW-1185">Reference proteome</keyword>
<keyword id="KW-0964">Secreted</keyword>
<keyword id="KW-0732">Signal</keyword>
<name>PERL_CAPHI</name>
<evidence type="ECO:0000250" key="1">
    <source>
        <dbReference type="UniProtKB" id="P11678"/>
    </source>
</evidence>
<evidence type="ECO:0000250" key="2">
    <source>
        <dbReference type="UniProtKB" id="P22079"/>
    </source>
</evidence>
<evidence type="ECO:0000250" key="3">
    <source>
        <dbReference type="UniProtKB" id="P80025"/>
    </source>
</evidence>
<evidence type="ECO:0000250" key="4">
    <source>
        <dbReference type="UniProtKB" id="Q5SW46"/>
    </source>
</evidence>
<evidence type="ECO:0000255" key="5"/>
<evidence type="ECO:0000255" key="6">
    <source>
        <dbReference type="PROSITE-ProRule" id="PRU00298"/>
    </source>
</evidence>
<evidence type="ECO:0000255" key="7">
    <source>
        <dbReference type="PROSITE-ProRule" id="PRU00498"/>
    </source>
</evidence>
<evidence type="ECO:0000269" key="8">
    <source>
    </source>
</evidence>
<evidence type="ECO:0000269" key="9">
    <source>
    </source>
</evidence>
<evidence type="ECO:0000269" key="10">
    <source>
    </source>
</evidence>
<evidence type="ECO:0000269" key="11">
    <source>
    </source>
</evidence>
<evidence type="ECO:0000269" key="12">
    <source>
    </source>
</evidence>
<evidence type="ECO:0000269" key="13">
    <source ref="11"/>
</evidence>
<evidence type="ECO:0000269" key="14">
    <source ref="5"/>
</evidence>
<evidence type="ECO:0000269" key="15">
    <source ref="6"/>
</evidence>
<evidence type="ECO:0000269" key="16">
    <source ref="7"/>
</evidence>
<evidence type="ECO:0000303" key="17">
    <source>
    </source>
</evidence>
<evidence type="ECO:0000305" key="18"/>
<evidence type="ECO:0000305" key="19">
    <source>
    </source>
</evidence>
<evidence type="ECO:0000312" key="20">
    <source>
        <dbReference type="EMBL" id="ABN41562.1"/>
    </source>
</evidence>
<evidence type="ECO:0000312" key="21">
    <source>
        <dbReference type="Proteomes" id="UP000291000"/>
    </source>
</evidence>
<evidence type="ECO:0007744" key="22">
    <source>
        <dbReference type="PDB" id="2E9E"/>
    </source>
</evidence>
<evidence type="ECO:0007744" key="23">
    <source>
        <dbReference type="PDB" id="2EFB"/>
    </source>
</evidence>
<evidence type="ECO:0007744" key="24">
    <source>
        <dbReference type="PDB" id="2EHA"/>
    </source>
</evidence>
<evidence type="ECO:0007744" key="25">
    <source>
        <dbReference type="PDB" id="2OJV"/>
    </source>
</evidence>
<evidence type="ECO:0007744" key="26">
    <source>
        <dbReference type="PDB" id="2R5L"/>
    </source>
</evidence>
<evidence type="ECO:0007744" key="27">
    <source>
        <dbReference type="PDB" id="3N8F"/>
    </source>
</evidence>
<evidence type="ECO:0007744" key="28">
    <source>
        <dbReference type="PDB" id="3NAK"/>
    </source>
</evidence>
<evidence type="ECO:0007744" key="29">
    <source>
        <dbReference type="PDB" id="3NIU"/>
    </source>
</evidence>
<evidence type="ECO:0007744" key="30">
    <source>
        <dbReference type="PDB" id="3QF1"/>
    </source>
</evidence>
<evidence type="ECO:0007744" key="31">
    <source>
        <dbReference type="PDB" id="3R55"/>
    </source>
</evidence>
<evidence type="ECO:0007744" key="32">
    <source>
        <dbReference type="PDB" id="3RKE"/>
    </source>
</evidence>
<evidence type="ECO:0007744" key="33">
    <source>
        <dbReference type="PDB" id="3SXV"/>
    </source>
</evidence>
<evidence type="ECO:0007744" key="34">
    <source>
        <dbReference type="PDB" id="4MSF"/>
    </source>
</evidence>
<evidence type="ECO:0007744" key="35">
    <source>
        <dbReference type="PDB" id="4OEK"/>
    </source>
</evidence>
<evidence type="ECO:0007744" key="36">
    <source>
        <dbReference type="PDB" id="4QJQ"/>
    </source>
</evidence>
<evidence type="ECO:0007744" key="37">
    <source>
        <dbReference type="PDB" id="5FF1"/>
    </source>
</evidence>
<evidence type="ECO:0007744" key="38">
    <source>
        <dbReference type="PDB" id="5HPW"/>
    </source>
</evidence>
<evidence type="ECO:0007744" key="39">
    <source>
        <dbReference type="PDB" id="6LF7"/>
    </source>
</evidence>
<evidence type="ECO:0007744" key="40">
    <source>
        <dbReference type="PDB" id="8ING"/>
    </source>
</evidence>
<evidence type="ECO:0007829" key="41">
    <source>
        <dbReference type="PDB" id="2EFB"/>
    </source>
</evidence>
<evidence type="ECO:0007829" key="42">
    <source>
        <dbReference type="PDB" id="2OJV"/>
    </source>
</evidence>
<evidence type="ECO:0007829" key="43">
    <source>
        <dbReference type="PDB" id="3QF1"/>
    </source>
</evidence>
<evidence type="ECO:0007829" key="44">
    <source>
        <dbReference type="PDB" id="3R55"/>
    </source>
</evidence>
<evidence type="ECO:0007829" key="45">
    <source>
        <dbReference type="PDB" id="3RKE"/>
    </source>
</evidence>
<evidence type="ECO:0007829" key="46">
    <source>
        <dbReference type="PDB" id="4OEK"/>
    </source>
</evidence>
<evidence type="ECO:0007829" key="47">
    <source>
        <dbReference type="PDB" id="5FF1"/>
    </source>
</evidence>
<evidence type="ECO:0007829" key="48">
    <source>
        <dbReference type="PDB" id="6LF7"/>
    </source>
</evidence>
<evidence type="ECO:0007829" key="49">
    <source>
        <dbReference type="PDB" id="8ING"/>
    </source>
</evidence>
<dbReference type="EC" id="1.11.1.7" evidence="3"/>
<dbReference type="EMBL" id="EF363153">
    <property type="protein sequence ID" value="ABN41562.1"/>
    <property type="molecule type" value="mRNA"/>
</dbReference>
<dbReference type="EMBL" id="LWLT01000022">
    <property type="status" value="NOT_ANNOTATED_CDS"/>
    <property type="molecule type" value="Genomic_DNA"/>
</dbReference>
<dbReference type="RefSeq" id="NP_001272546.1">
    <property type="nucleotide sequence ID" value="NM_001285617.1"/>
</dbReference>
<dbReference type="RefSeq" id="XP_017919048.1">
    <property type="nucleotide sequence ID" value="XM_018063559.1"/>
</dbReference>
<dbReference type="RefSeq" id="XP_017919049.1">
    <property type="nucleotide sequence ID" value="XM_018063560.1"/>
</dbReference>
<dbReference type="RefSeq" id="XP_017919050.1">
    <property type="nucleotide sequence ID" value="XM_018063561.1"/>
</dbReference>
<dbReference type="RefSeq" id="XP_017919051.1">
    <property type="nucleotide sequence ID" value="XM_018063562.1"/>
</dbReference>
<dbReference type="PDB" id="2E9E">
    <property type="method" value="X-ray"/>
    <property type="resolution" value="3.25 A"/>
    <property type="chains" value="A/B=118-712"/>
</dbReference>
<dbReference type="PDB" id="2EFB">
    <property type="method" value="X-ray"/>
    <property type="resolution" value="2.94 A"/>
    <property type="chains" value="A/B=118-712"/>
</dbReference>
<dbReference type="PDB" id="2EHA">
    <property type="method" value="X-ray"/>
    <property type="resolution" value="3.30 A"/>
    <property type="chains" value="A/B=118-712"/>
</dbReference>
<dbReference type="PDB" id="2OJV">
    <property type="method" value="X-ray"/>
    <property type="resolution" value="2.40 A"/>
    <property type="chains" value="A=118-712"/>
</dbReference>
<dbReference type="PDB" id="2R5L">
    <property type="method" value="X-ray"/>
    <property type="resolution" value="2.40 A"/>
    <property type="chains" value="A=118-712"/>
</dbReference>
<dbReference type="PDB" id="3N8F">
    <property type="method" value="X-ray"/>
    <property type="resolution" value="3.25 A"/>
    <property type="chains" value="A/B=118-712"/>
</dbReference>
<dbReference type="PDB" id="3NAK">
    <property type="method" value="X-ray"/>
    <property type="resolution" value="3.30 A"/>
    <property type="chains" value="A/B=118-712"/>
</dbReference>
<dbReference type="PDB" id="3NIU">
    <property type="method" value="X-ray"/>
    <property type="resolution" value="2.94 A"/>
    <property type="chains" value="A/B=118-712"/>
</dbReference>
<dbReference type="PDB" id="3QF1">
    <property type="method" value="X-ray"/>
    <property type="resolution" value="2.60 A"/>
    <property type="chains" value="A=118-712"/>
</dbReference>
<dbReference type="PDB" id="3R55">
    <property type="method" value="X-ray"/>
    <property type="resolution" value="2.10 A"/>
    <property type="chains" value="A=118-712"/>
</dbReference>
<dbReference type="PDB" id="3RKE">
    <property type="method" value="X-ray"/>
    <property type="resolution" value="2.30 A"/>
    <property type="chains" value="A=118-712"/>
</dbReference>
<dbReference type="PDB" id="3SXV">
    <property type="method" value="X-ray"/>
    <property type="resolution" value="2.10 A"/>
    <property type="chains" value="A=118-712"/>
</dbReference>
<dbReference type="PDB" id="4MSF">
    <property type="method" value="X-ray"/>
    <property type="resolution" value="1.98 A"/>
    <property type="chains" value="A=118-712"/>
</dbReference>
<dbReference type="PDB" id="4OEK">
    <property type="method" value="X-ray"/>
    <property type="resolution" value="2.47 A"/>
    <property type="chains" value="A=118-712"/>
</dbReference>
<dbReference type="PDB" id="4QJQ">
    <property type="method" value="X-ray"/>
    <property type="resolution" value="2.10 A"/>
    <property type="chains" value="A=118-712"/>
</dbReference>
<dbReference type="PDB" id="5FF1">
    <property type="method" value="X-ray"/>
    <property type="resolution" value="1.97 A"/>
    <property type="chains" value="A/B=118-712"/>
</dbReference>
<dbReference type="PDB" id="5HPW">
    <property type="method" value="X-ray"/>
    <property type="resolution" value="2.50 A"/>
    <property type="chains" value="A/B/C/D=118-712"/>
</dbReference>
<dbReference type="PDB" id="6LF7">
    <property type="method" value="X-ray"/>
    <property type="resolution" value="1.79 A"/>
    <property type="chains" value="A=118-712"/>
</dbReference>
<dbReference type="PDB" id="8ING">
    <property type="method" value="X-ray"/>
    <property type="resolution" value="1.98 A"/>
    <property type="chains" value="A=118-712"/>
</dbReference>
<dbReference type="PDBsum" id="2E9E"/>
<dbReference type="PDBsum" id="2EFB"/>
<dbReference type="PDBsum" id="2EHA"/>
<dbReference type="PDBsum" id="2OJV"/>
<dbReference type="PDBsum" id="2R5L"/>
<dbReference type="PDBsum" id="3N8F"/>
<dbReference type="PDBsum" id="3NAK"/>
<dbReference type="PDBsum" id="3NIU"/>
<dbReference type="PDBsum" id="3QF1"/>
<dbReference type="PDBsum" id="3R55"/>
<dbReference type="PDBsum" id="3RKE"/>
<dbReference type="PDBsum" id="3SXV"/>
<dbReference type="PDBsum" id="4MSF"/>
<dbReference type="PDBsum" id="4OEK"/>
<dbReference type="PDBsum" id="4QJQ"/>
<dbReference type="PDBsum" id="5FF1"/>
<dbReference type="PDBsum" id="5HPW"/>
<dbReference type="PDBsum" id="6LF7"/>
<dbReference type="PDBsum" id="8ING"/>
<dbReference type="SMR" id="A0A452E9Y6"/>
<dbReference type="STRING" id="9925.ENSCHIP00000008975"/>
<dbReference type="PeroxiBase" id="5320">
    <property type="entry name" value="ChiLPO01"/>
</dbReference>
<dbReference type="GlyCosmos" id="A0A452E9Y6">
    <property type="glycosylation" value="5 sites, No reported glycans"/>
</dbReference>
<dbReference type="iPTMnet" id="A0A452E9Y6"/>
<dbReference type="Ensembl" id="ENSCHIT00000016739.1">
    <property type="protein sequence ID" value="ENSCHIP00000008975.1"/>
    <property type="gene ID" value="ENSCHIG00000011979.1"/>
</dbReference>
<dbReference type="Ensembl" id="ENSCHIT00040030207">
    <property type="protein sequence ID" value="ENSCHIP00040023758"/>
    <property type="gene ID" value="ENSCHIG00040013820"/>
</dbReference>
<dbReference type="GeneID" id="100860761"/>
<dbReference type="KEGG" id="chx:100860761"/>
<dbReference type="CTD" id="4025"/>
<dbReference type="GeneTree" id="ENSGT00940000160488"/>
<dbReference type="OMA" id="QNKMMTR"/>
<dbReference type="OrthoDB" id="823504at2759"/>
<dbReference type="EvolutionaryTrace" id="A0A452E9Y6"/>
<dbReference type="Proteomes" id="UP000291000">
    <property type="component" value="Chromosome 19"/>
</dbReference>
<dbReference type="Proteomes" id="UP000694566">
    <property type="component" value="Unplaced"/>
</dbReference>
<dbReference type="Bgee" id="ENSCHIG00000011979">
    <property type="expression patterns" value="Expressed in rumen and 5 other cell types or tissues"/>
</dbReference>
<dbReference type="GO" id="GO:0016323">
    <property type="term" value="C:basolateral plasma membrane"/>
    <property type="evidence" value="ECO:0007669"/>
    <property type="project" value="Ensembl"/>
</dbReference>
<dbReference type="GO" id="GO:0005737">
    <property type="term" value="C:cytoplasm"/>
    <property type="evidence" value="ECO:0007669"/>
    <property type="project" value="UniProtKB-SubCell"/>
</dbReference>
<dbReference type="GO" id="GO:0005615">
    <property type="term" value="C:extracellular space"/>
    <property type="evidence" value="ECO:0000314"/>
    <property type="project" value="UniProtKB"/>
</dbReference>
<dbReference type="GO" id="GO:0005509">
    <property type="term" value="F:calcium ion binding"/>
    <property type="evidence" value="ECO:0000314"/>
    <property type="project" value="UniProtKB"/>
</dbReference>
<dbReference type="GO" id="GO:0020037">
    <property type="term" value="F:heme binding"/>
    <property type="evidence" value="ECO:0000314"/>
    <property type="project" value="UniProtKB"/>
</dbReference>
<dbReference type="GO" id="GO:0140825">
    <property type="term" value="F:lactoperoxidase activity"/>
    <property type="evidence" value="ECO:0007669"/>
    <property type="project" value="UniProtKB-EC"/>
</dbReference>
<dbReference type="GO" id="GO:0004601">
    <property type="term" value="F:peroxidase activity"/>
    <property type="evidence" value="ECO:0000314"/>
    <property type="project" value="UniProtKB"/>
</dbReference>
<dbReference type="GO" id="GO:0036393">
    <property type="term" value="F:thiocyanate peroxidase activity"/>
    <property type="evidence" value="ECO:0000314"/>
    <property type="project" value="UniProtKB"/>
</dbReference>
<dbReference type="GO" id="GO:0019731">
    <property type="term" value="P:antibacterial humoral response"/>
    <property type="evidence" value="ECO:0000314"/>
    <property type="project" value="UniProtKB"/>
</dbReference>
<dbReference type="GO" id="GO:0019732">
    <property type="term" value="P:antifungal humoral response"/>
    <property type="evidence" value="ECO:0000314"/>
    <property type="project" value="UniProtKB"/>
</dbReference>
<dbReference type="GO" id="GO:0001580">
    <property type="term" value="P:detection of chemical stimulus involved in sensory perception of bitter taste"/>
    <property type="evidence" value="ECO:0007669"/>
    <property type="project" value="Ensembl"/>
</dbReference>
<dbReference type="GO" id="GO:0042744">
    <property type="term" value="P:hydrogen peroxide catabolic process"/>
    <property type="evidence" value="ECO:0000314"/>
    <property type="project" value="UniProtKB"/>
</dbReference>
<dbReference type="GO" id="GO:0006979">
    <property type="term" value="P:response to oxidative stress"/>
    <property type="evidence" value="ECO:0007669"/>
    <property type="project" value="InterPro"/>
</dbReference>
<dbReference type="GO" id="GO:0046265">
    <property type="term" value="P:thiocyanate catabolic process"/>
    <property type="evidence" value="ECO:0000314"/>
    <property type="project" value="UniProtKB"/>
</dbReference>
<dbReference type="CDD" id="cd09824">
    <property type="entry name" value="myeloperoxidase_like"/>
    <property type="match status" value="1"/>
</dbReference>
<dbReference type="FunFam" id="1.10.640.10:FF:000001">
    <property type="entry name" value="Peroxidasin homolog"/>
    <property type="match status" value="1"/>
</dbReference>
<dbReference type="Gene3D" id="1.10.640.10">
    <property type="entry name" value="Haem peroxidase domain superfamily, animal type"/>
    <property type="match status" value="1"/>
</dbReference>
<dbReference type="InterPro" id="IPR019791">
    <property type="entry name" value="Haem_peroxidase_animal"/>
</dbReference>
<dbReference type="InterPro" id="IPR010255">
    <property type="entry name" value="Haem_peroxidase_sf"/>
</dbReference>
<dbReference type="InterPro" id="IPR037120">
    <property type="entry name" value="Haem_peroxidase_sf_animal"/>
</dbReference>
<dbReference type="PANTHER" id="PTHR11475:SF67">
    <property type="entry name" value="LACTOPEROXIDASE"/>
    <property type="match status" value="1"/>
</dbReference>
<dbReference type="PANTHER" id="PTHR11475">
    <property type="entry name" value="OXIDASE/PEROXIDASE"/>
    <property type="match status" value="1"/>
</dbReference>
<dbReference type="Pfam" id="PF03098">
    <property type="entry name" value="An_peroxidase"/>
    <property type="match status" value="1"/>
</dbReference>
<dbReference type="PRINTS" id="PR00457">
    <property type="entry name" value="ANPEROXIDASE"/>
</dbReference>
<dbReference type="SUPFAM" id="SSF48113">
    <property type="entry name" value="Heme-dependent peroxidases"/>
    <property type="match status" value="1"/>
</dbReference>
<dbReference type="PROSITE" id="PS50292">
    <property type="entry name" value="PEROXIDASE_3"/>
    <property type="match status" value="1"/>
</dbReference>
<organism evidence="21">
    <name type="scientific">Capra hircus</name>
    <name type="common">Goat</name>
    <dbReference type="NCBI Taxonomy" id="9925"/>
    <lineage>
        <taxon>Eukaryota</taxon>
        <taxon>Metazoa</taxon>
        <taxon>Chordata</taxon>
        <taxon>Craniata</taxon>
        <taxon>Vertebrata</taxon>
        <taxon>Euteleostomi</taxon>
        <taxon>Mammalia</taxon>
        <taxon>Eutheria</taxon>
        <taxon>Laurasiatheria</taxon>
        <taxon>Artiodactyla</taxon>
        <taxon>Ruminantia</taxon>
        <taxon>Pecora</taxon>
        <taxon>Bovidae</taxon>
        <taxon>Caprinae</taxon>
        <taxon>Capra</taxon>
    </lineage>
</organism>
<gene>
    <name type="primary">LPO</name>
</gene>
<proteinExistence type="evidence at protein level"/>
<accession>A0A452E9Y6</accession>
<accession>A3F9D6</accession>